<proteinExistence type="inferred from homology"/>
<organism>
    <name type="scientific">Haemophilus influenzae (strain PittGG)</name>
    <dbReference type="NCBI Taxonomy" id="374931"/>
    <lineage>
        <taxon>Bacteria</taxon>
        <taxon>Pseudomonadati</taxon>
        <taxon>Pseudomonadota</taxon>
        <taxon>Gammaproteobacteria</taxon>
        <taxon>Pasteurellales</taxon>
        <taxon>Pasteurellaceae</taxon>
        <taxon>Haemophilus</taxon>
    </lineage>
</organism>
<dbReference type="EC" id="4.4.1.21" evidence="1"/>
<dbReference type="EMBL" id="CP000672">
    <property type="protein sequence ID" value="ABR00057.1"/>
    <property type="molecule type" value="Genomic_DNA"/>
</dbReference>
<dbReference type="SMR" id="A5UH01"/>
<dbReference type="KEGG" id="hiq:CGSHiGG_05710"/>
<dbReference type="HOGENOM" id="CLU_107531_2_0_6"/>
<dbReference type="Proteomes" id="UP000001990">
    <property type="component" value="Chromosome"/>
</dbReference>
<dbReference type="GO" id="GO:0005506">
    <property type="term" value="F:iron ion binding"/>
    <property type="evidence" value="ECO:0007669"/>
    <property type="project" value="InterPro"/>
</dbReference>
<dbReference type="GO" id="GO:0043768">
    <property type="term" value="F:S-ribosylhomocysteine lyase activity"/>
    <property type="evidence" value="ECO:0007669"/>
    <property type="project" value="UniProtKB-UniRule"/>
</dbReference>
<dbReference type="GO" id="GO:0009372">
    <property type="term" value="P:quorum sensing"/>
    <property type="evidence" value="ECO:0007669"/>
    <property type="project" value="UniProtKB-UniRule"/>
</dbReference>
<dbReference type="Gene3D" id="3.30.1360.80">
    <property type="entry name" value="S-ribosylhomocysteinase (LuxS)"/>
    <property type="match status" value="1"/>
</dbReference>
<dbReference type="HAMAP" id="MF_00091">
    <property type="entry name" value="LuxS"/>
    <property type="match status" value="1"/>
</dbReference>
<dbReference type="InterPro" id="IPR037005">
    <property type="entry name" value="LuxS_sf"/>
</dbReference>
<dbReference type="InterPro" id="IPR011249">
    <property type="entry name" value="Metalloenz_LuxS/M16"/>
</dbReference>
<dbReference type="InterPro" id="IPR003815">
    <property type="entry name" value="S-ribosylhomocysteinase"/>
</dbReference>
<dbReference type="NCBIfam" id="NF002602">
    <property type="entry name" value="PRK02260.1-2"/>
    <property type="match status" value="1"/>
</dbReference>
<dbReference type="PANTHER" id="PTHR35799">
    <property type="entry name" value="S-RIBOSYLHOMOCYSTEINE LYASE"/>
    <property type="match status" value="1"/>
</dbReference>
<dbReference type="PANTHER" id="PTHR35799:SF1">
    <property type="entry name" value="S-RIBOSYLHOMOCYSTEINE LYASE"/>
    <property type="match status" value="1"/>
</dbReference>
<dbReference type="Pfam" id="PF02664">
    <property type="entry name" value="LuxS"/>
    <property type="match status" value="1"/>
</dbReference>
<dbReference type="PIRSF" id="PIRSF006160">
    <property type="entry name" value="AI2"/>
    <property type="match status" value="1"/>
</dbReference>
<dbReference type="PRINTS" id="PR01487">
    <property type="entry name" value="LUXSPROTEIN"/>
</dbReference>
<dbReference type="SUPFAM" id="SSF63411">
    <property type="entry name" value="LuxS/MPP-like metallohydrolase"/>
    <property type="match status" value="1"/>
</dbReference>
<sequence>MPLLDSFKVDHTKMNAPAVRIAKTMLTPKGDNITVFDLRFCIPNKEILSPKGIHTLEHLFAGFMRDHLNGDSIEIIDISPMGCRTGFYMSLIGTPNEQEVSEAWLASMQDVLGVQDQAAIPELNIYQCGSYTEHSLEDAHEIAKNVIARGIGVNKNEDLSLDNSLLK</sequence>
<name>LUXS_HAEIG</name>
<accession>A5UH01</accession>
<gene>
    <name evidence="1" type="primary">luxS</name>
    <name type="ordered locus">CGSHiGG_05710</name>
</gene>
<protein>
    <recommendedName>
        <fullName evidence="1">S-ribosylhomocysteine lyase</fullName>
        <ecNumber evidence="1">4.4.1.21</ecNumber>
    </recommendedName>
    <alternativeName>
        <fullName evidence="1">AI-2 synthesis protein</fullName>
    </alternativeName>
    <alternativeName>
        <fullName evidence="1">Autoinducer-2 production protein LuxS</fullName>
    </alternativeName>
</protein>
<keyword id="KW-0071">Autoinducer synthesis</keyword>
<keyword id="KW-0408">Iron</keyword>
<keyword id="KW-0456">Lyase</keyword>
<keyword id="KW-0479">Metal-binding</keyword>
<keyword id="KW-0673">Quorum sensing</keyword>
<reference key="1">
    <citation type="journal article" date="2007" name="Genome Biol.">
        <title>Characterization and modeling of the Haemophilus influenzae core and supragenomes based on the complete genomic sequences of Rd and 12 clinical nontypeable strains.</title>
        <authorList>
            <person name="Hogg J.S."/>
            <person name="Hu F.Z."/>
            <person name="Janto B."/>
            <person name="Boissy R."/>
            <person name="Hayes J."/>
            <person name="Keefe R."/>
            <person name="Post J.C."/>
            <person name="Ehrlich G.D."/>
        </authorList>
    </citation>
    <scope>NUCLEOTIDE SEQUENCE [LARGE SCALE GENOMIC DNA]</scope>
    <source>
        <strain>PittGG</strain>
    </source>
</reference>
<evidence type="ECO:0000255" key="1">
    <source>
        <dbReference type="HAMAP-Rule" id="MF_00091"/>
    </source>
</evidence>
<feature type="chain" id="PRO_1000004845" description="S-ribosylhomocysteine lyase">
    <location>
        <begin position="1"/>
        <end position="167"/>
    </location>
</feature>
<feature type="binding site" evidence="1">
    <location>
        <position position="54"/>
    </location>
    <ligand>
        <name>Fe cation</name>
        <dbReference type="ChEBI" id="CHEBI:24875"/>
    </ligand>
</feature>
<feature type="binding site" evidence="1">
    <location>
        <position position="58"/>
    </location>
    <ligand>
        <name>Fe cation</name>
        <dbReference type="ChEBI" id="CHEBI:24875"/>
    </ligand>
</feature>
<feature type="binding site" evidence="1">
    <location>
        <position position="128"/>
    </location>
    <ligand>
        <name>Fe cation</name>
        <dbReference type="ChEBI" id="CHEBI:24875"/>
    </ligand>
</feature>
<comment type="function">
    <text evidence="1">Involved in the synthesis of autoinducer 2 (AI-2) which is secreted by bacteria and is used to communicate both the cell density and the metabolic potential of the environment. The regulation of gene expression in response to changes in cell density is called quorum sensing. Catalyzes the transformation of S-ribosylhomocysteine (RHC) to homocysteine (HC) and 4,5-dihydroxy-2,3-pentadione (DPD).</text>
</comment>
<comment type="catalytic activity">
    <reaction evidence="1">
        <text>S-(5-deoxy-D-ribos-5-yl)-L-homocysteine = (S)-4,5-dihydroxypentane-2,3-dione + L-homocysteine</text>
        <dbReference type="Rhea" id="RHEA:17753"/>
        <dbReference type="ChEBI" id="CHEBI:29484"/>
        <dbReference type="ChEBI" id="CHEBI:58195"/>
        <dbReference type="ChEBI" id="CHEBI:58199"/>
        <dbReference type="EC" id="4.4.1.21"/>
    </reaction>
</comment>
<comment type="cofactor">
    <cofactor evidence="1">
        <name>Fe cation</name>
        <dbReference type="ChEBI" id="CHEBI:24875"/>
    </cofactor>
    <text evidence="1">Binds 1 Fe cation per subunit.</text>
</comment>
<comment type="subunit">
    <text evidence="1">Homodimer.</text>
</comment>
<comment type="similarity">
    <text evidence="1">Belongs to the LuxS family.</text>
</comment>